<proteinExistence type="inferred from homology"/>
<sequence>MPFSRRRRVVRRRKPVRRLRRRRRRFFKRAGRGSFRVKLTRFVSITQDISKTTQFSFEITPSDFTEFATLADAFEAVRFTRAKVTVLPQQNVSNNSTSLIPAYCMFPWHKELPTVATFNGFLSIDRAKCFRGTQVGIQHYVPSTLDSIQTKGAAGYEVQSVQTKYKPTIQISGGASTVVLYTGALGMQALSDAPENAQAHYNIKIDMWCTFINQTSFNK</sequence>
<protein>
    <recommendedName>
        <fullName>Capsid protein</fullName>
    </recommendedName>
</protein>
<feature type="chain" id="PRO_0000445706" description="Capsid protein">
    <location>
        <begin position="1"/>
        <end position="219"/>
    </location>
</feature>
<feature type="region of interest" description="Nuclear localization signals" evidence="1">
    <location>
        <begin position="5"/>
        <end position="29"/>
    </location>
</feature>
<dbReference type="EMBL" id="GQ404847">
    <property type="protein sequence ID" value="ADD62458.1"/>
    <property type="molecule type" value="Genomic_DNA"/>
</dbReference>
<dbReference type="SMR" id="D4N3P3"/>
<dbReference type="OrthoDB" id="18040at10239"/>
<dbReference type="Proteomes" id="UP000146794">
    <property type="component" value="Genome"/>
</dbReference>
<dbReference type="GO" id="GO:0043657">
    <property type="term" value="C:host cell"/>
    <property type="evidence" value="ECO:0007669"/>
    <property type="project" value="GOC"/>
</dbReference>
<dbReference type="GO" id="GO:0042025">
    <property type="term" value="C:host cell nucleus"/>
    <property type="evidence" value="ECO:0007669"/>
    <property type="project" value="UniProtKB-SubCell"/>
</dbReference>
<dbReference type="GO" id="GO:0039615">
    <property type="term" value="C:T=1 icosahedral viral capsid"/>
    <property type="evidence" value="ECO:0007669"/>
    <property type="project" value="UniProtKB-KW"/>
</dbReference>
<dbReference type="GO" id="GO:0003677">
    <property type="term" value="F:DNA binding"/>
    <property type="evidence" value="ECO:0007669"/>
    <property type="project" value="UniProtKB-KW"/>
</dbReference>
<dbReference type="GO" id="GO:0075509">
    <property type="term" value="P:endocytosis involved in viral entry into host cell"/>
    <property type="evidence" value="ECO:0007669"/>
    <property type="project" value="UniProtKB-KW"/>
</dbReference>
<dbReference type="GO" id="GO:0019069">
    <property type="term" value="P:viral capsid assembly"/>
    <property type="evidence" value="ECO:0007669"/>
    <property type="project" value="InterPro"/>
</dbReference>
<dbReference type="GO" id="GO:0075732">
    <property type="term" value="P:viral penetration into host nucleus"/>
    <property type="evidence" value="ECO:0007669"/>
    <property type="project" value="UniProtKB-KW"/>
</dbReference>
<dbReference type="GO" id="GO:0019062">
    <property type="term" value="P:virion attachment to host cell"/>
    <property type="evidence" value="ECO:0007669"/>
    <property type="project" value="UniProtKB-KW"/>
</dbReference>
<dbReference type="InterPro" id="IPR003383">
    <property type="entry name" value="Circovirus_capsid"/>
</dbReference>
<dbReference type="Pfam" id="PF02443">
    <property type="entry name" value="Circo_capsid"/>
    <property type="match status" value="1"/>
</dbReference>
<organismHost>
    <name type="scientific">Homo sapiens</name>
    <name type="common">Human</name>
    <dbReference type="NCBI Taxonomy" id="9606"/>
</organismHost>
<name>CAPSD_HCYV5</name>
<accession>D4N3P3</accession>
<keyword id="KW-0167">Capsid protein</keyword>
<keyword id="KW-0238">DNA-binding</keyword>
<keyword id="KW-1048">Host nucleus</keyword>
<keyword id="KW-0945">Host-virus interaction</keyword>
<keyword id="KW-1185">Reference proteome</keyword>
<keyword id="KW-1140">T=1 icosahedral capsid protein</keyword>
<keyword id="KW-1161">Viral attachment to host cell</keyword>
<keyword id="KW-1162">Viral penetration into host cytoplasm</keyword>
<keyword id="KW-1163">Viral penetration into host nucleus</keyword>
<keyword id="KW-0946">Virion</keyword>
<keyword id="KW-1164">Virus endocytosis by host</keyword>
<keyword id="KW-1160">Virus entry into host cell</keyword>
<reference key="1">
    <citation type="journal article" date="2010" name="J. Virol.">
        <title>Multiple diverse circoviruses infect farm animals and are commonly found in human and chimpanzee feces.</title>
        <authorList>
            <person name="Li L."/>
            <person name="Kapoor A."/>
            <person name="Slikas B."/>
            <person name="Bamidele O.S."/>
            <person name="Wang C."/>
            <person name="Shaukat S."/>
            <person name="Masroor M.A."/>
            <person name="Wilson M.L."/>
            <person name="Ndjango J.B."/>
            <person name="Peeters M."/>
            <person name="Gross-Camp N.D."/>
            <person name="Muller M.N."/>
            <person name="Hahn B.H."/>
            <person name="Wolfe N.D."/>
            <person name="Triki H."/>
            <person name="Bartkus J."/>
            <person name="Zaidi S.Z."/>
            <person name="Delwart E."/>
        </authorList>
    </citation>
    <scope>NUCLEOTIDE SEQUENCE [LARGE SCALE GENOMIC DNA]</scope>
</reference>
<comment type="function">
    <text evidence="2">Self-assembles to form the virion icosahedral capsid with a T=1 symmetry. This very small capsid (17-22 nm in diameter) allows the virus to be very stable in the environment and resistant to some disinfectants, including detergents. Essential for the initial attachment to heparan sulfate moieties and chondroitin sulfate B of the host cell surface proteoglycans. After attachment, the virus is endocytosed and traffics to the nucleus. The capsid protein binds and transports the viral genome and Rep across the nuclear envelope.</text>
</comment>
<comment type="subunit">
    <text evidence="2">Homomultimer. Assembles in the nucleus, presumably in an immature form, then migrates to the cytoplasm once assembled as mature virion. Interacts with Rep; this interaction relocates Rep into the nucleus.</text>
</comment>
<comment type="subcellular location">
    <subcellularLocation>
        <location evidence="2">Host nucleus</location>
    </subcellularLocation>
    <subcellularLocation>
        <location evidence="2">Virion</location>
    </subcellularLocation>
</comment>
<comment type="similarity">
    <text evidence="3">Belongs to the circoviridae capsid protein family.</text>
</comment>
<evidence type="ECO:0000250" key="1">
    <source>
        <dbReference type="UniProtKB" id="O56129"/>
    </source>
</evidence>
<evidence type="ECO:0000250" key="2">
    <source>
        <dbReference type="UniProtKB" id="Q9YUC8"/>
    </source>
</evidence>
<evidence type="ECO:0000305" key="3"/>
<gene>
    <name type="primary">Cap</name>
    <name type="ORF">ORF2</name>
</gene>
<organism>
    <name type="scientific">Human associated cyclovirus 1 (isolate Homo sapiens/Pakistan/PK5510/2007)</name>
    <name type="common">HuCyV-1</name>
    <name type="synonym">Cyclovirus PK5510</name>
    <dbReference type="NCBI Taxonomy" id="742918"/>
    <lineage>
        <taxon>Viruses</taxon>
        <taxon>Monodnaviria</taxon>
        <taxon>Shotokuvirae</taxon>
        <taxon>Cressdnaviricota</taxon>
        <taxon>Arfiviricetes</taxon>
        <taxon>Cirlivirales</taxon>
        <taxon>Circoviridae</taxon>
        <taxon>Cyclovirus</taxon>
        <taxon>Cyclovirus maanav</taxon>
    </lineage>
</organism>